<accession>A1KIL2</accession>
<protein>
    <recommendedName>
        <fullName evidence="2">Probable cell division protein WhiA</fullName>
    </recommendedName>
</protein>
<reference key="1">
    <citation type="journal article" date="2007" name="Proc. Natl. Acad. Sci. U.S.A.">
        <title>Genome plasticity of BCG and impact on vaccine efficacy.</title>
        <authorList>
            <person name="Brosch R."/>
            <person name="Gordon S.V."/>
            <person name="Garnier T."/>
            <person name="Eiglmeier K."/>
            <person name="Frigui W."/>
            <person name="Valenti P."/>
            <person name="Dos Santos S."/>
            <person name="Duthoy S."/>
            <person name="Lacroix C."/>
            <person name="Garcia-Pelayo C."/>
            <person name="Inwald J.K."/>
            <person name="Golby P."/>
            <person name="Garcia J.N."/>
            <person name="Hewinson R.G."/>
            <person name="Behr M.A."/>
            <person name="Quail M.A."/>
            <person name="Churcher C."/>
            <person name="Barrell B.G."/>
            <person name="Parkhill J."/>
            <person name="Cole S.T."/>
        </authorList>
    </citation>
    <scope>NUCLEOTIDE SEQUENCE [LARGE SCALE GENOMIC DNA]</scope>
    <source>
        <strain>BCG / Pasteur 1173P2</strain>
    </source>
</reference>
<name>WHIA_MYCBP</name>
<keyword id="KW-0131">Cell cycle</keyword>
<keyword id="KW-0132">Cell division</keyword>
<keyword id="KW-0238">DNA-binding</keyword>
<evidence type="ECO:0000250" key="1">
    <source>
        <dbReference type="UniProtKB" id="P9WF45"/>
    </source>
</evidence>
<evidence type="ECO:0000255" key="2">
    <source>
        <dbReference type="HAMAP-Rule" id="MF_01420"/>
    </source>
</evidence>
<comment type="function">
    <text evidence="2">Involved in cell division and chromosome segregation.</text>
</comment>
<comment type="similarity">
    <text evidence="2">Belongs to the WhiA family.</text>
</comment>
<comment type="sequence caution" evidence="1">
    <conflict type="erroneous initiation">
        <sequence resource="EMBL-CDS" id="CAL71471"/>
    </conflict>
    <text>Truncated N-terminus.</text>
</comment>
<proteinExistence type="inferred from homology"/>
<sequence length="327" mass="35135">MAMTTDVKDELSRLVVKSVSARRAEVTSLLRFAGGLHIVGGRVVVEAELDLGSIARRLRKEIFELYGYTAVVHVLSASGIRKSTRYVLRVANDGEALARQTGLLDMRGRPVRGLPAQVVGGSIDDAEAAWRGAFLAHGSLTEPGRSSALEVSCPGPEAALALVGAARRLGVGAKAREVRGADRVVVRDGEAIGALLTRMGAQDTRLVWEERRLRREVRATANRLANFDDANLRRSARAAVAAAARVERALEILGDTVPEHLASAGKLRVEHRQASLEELGRLADPPMTKDAVAGRIRRLLSMADRKAKVDGIPDTESVVTPDLLEDA</sequence>
<dbReference type="EMBL" id="AM408590">
    <property type="protein sequence ID" value="CAL71471.1"/>
    <property type="status" value="ALT_INIT"/>
    <property type="molecule type" value="Genomic_DNA"/>
</dbReference>
<dbReference type="SMR" id="A1KIL2"/>
<dbReference type="KEGG" id="mbb:BCG_1484"/>
<dbReference type="HOGENOM" id="CLU_053282_0_0_11"/>
<dbReference type="Proteomes" id="UP000001472">
    <property type="component" value="Chromosome"/>
</dbReference>
<dbReference type="GO" id="GO:0003677">
    <property type="term" value="F:DNA binding"/>
    <property type="evidence" value="ECO:0007669"/>
    <property type="project" value="UniProtKB-UniRule"/>
</dbReference>
<dbReference type="GO" id="GO:0051301">
    <property type="term" value="P:cell division"/>
    <property type="evidence" value="ECO:0007669"/>
    <property type="project" value="UniProtKB-UniRule"/>
</dbReference>
<dbReference type="GO" id="GO:0043937">
    <property type="term" value="P:regulation of sporulation"/>
    <property type="evidence" value="ECO:0007669"/>
    <property type="project" value="InterPro"/>
</dbReference>
<dbReference type="FunFam" id="3.10.28.10:FF:000001">
    <property type="entry name" value="Probable cell division protein WhiA"/>
    <property type="match status" value="1"/>
</dbReference>
<dbReference type="Gene3D" id="3.10.28.10">
    <property type="entry name" value="Homing endonucleases"/>
    <property type="match status" value="1"/>
</dbReference>
<dbReference type="HAMAP" id="MF_01420">
    <property type="entry name" value="HTH_type_WhiA"/>
    <property type="match status" value="1"/>
</dbReference>
<dbReference type="InterPro" id="IPR027434">
    <property type="entry name" value="Homing_endonucl"/>
</dbReference>
<dbReference type="InterPro" id="IPR018478">
    <property type="entry name" value="Sporu_reg_WhiA_N_dom"/>
</dbReference>
<dbReference type="InterPro" id="IPR003802">
    <property type="entry name" value="Sporulation_regulator_WhiA"/>
</dbReference>
<dbReference type="InterPro" id="IPR023054">
    <property type="entry name" value="Sporulation_regulator_WhiA_C"/>
</dbReference>
<dbReference type="InterPro" id="IPR039518">
    <property type="entry name" value="WhiA_LAGLIDADG_dom"/>
</dbReference>
<dbReference type="NCBIfam" id="TIGR00647">
    <property type="entry name" value="DNA_bind_WhiA"/>
    <property type="match status" value="1"/>
</dbReference>
<dbReference type="PANTHER" id="PTHR37307">
    <property type="entry name" value="CELL DIVISION PROTEIN WHIA-RELATED"/>
    <property type="match status" value="1"/>
</dbReference>
<dbReference type="PANTHER" id="PTHR37307:SF1">
    <property type="entry name" value="CELL DIVISION PROTEIN WHIA-RELATED"/>
    <property type="match status" value="1"/>
</dbReference>
<dbReference type="Pfam" id="PF02650">
    <property type="entry name" value="HTH_WhiA"/>
    <property type="match status" value="1"/>
</dbReference>
<dbReference type="Pfam" id="PF14527">
    <property type="entry name" value="LAGLIDADG_WhiA"/>
    <property type="match status" value="1"/>
</dbReference>
<dbReference type="Pfam" id="PF10298">
    <property type="entry name" value="WhiA_N"/>
    <property type="match status" value="1"/>
</dbReference>
<feature type="chain" id="PRO_0000376524" description="Probable cell division protein WhiA">
    <location>
        <begin position="1"/>
        <end position="327"/>
    </location>
</feature>
<feature type="DNA-binding region" description="H-T-H motif" evidence="2">
    <location>
        <begin position="275"/>
        <end position="308"/>
    </location>
</feature>
<gene>
    <name evidence="2" type="primary">whiA</name>
    <name type="ordered locus">BCG_1484</name>
</gene>
<organism>
    <name type="scientific">Mycobacterium bovis (strain BCG / Pasteur 1173P2)</name>
    <dbReference type="NCBI Taxonomy" id="410289"/>
    <lineage>
        <taxon>Bacteria</taxon>
        <taxon>Bacillati</taxon>
        <taxon>Actinomycetota</taxon>
        <taxon>Actinomycetes</taxon>
        <taxon>Mycobacteriales</taxon>
        <taxon>Mycobacteriaceae</taxon>
        <taxon>Mycobacterium</taxon>
        <taxon>Mycobacterium tuberculosis complex</taxon>
    </lineage>
</organism>